<name>RECF_STAAC</name>
<accession>Q5HJZ2</accession>
<organism>
    <name type="scientific">Staphylococcus aureus (strain COL)</name>
    <dbReference type="NCBI Taxonomy" id="93062"/>
    <lineage>
        <taxon>Bacteria</taxon>
        <taxon>Bacillati</taxon>
        <taxon>Bacillota</taxon>
        <taxon>Bacilli</taxon>
        <taxon>Bacillales</taxon>
        <taxon>Staphylococcaceae</taxon>
        <taxon>Staphylococcus</taxon>
    </lineage>
</organism>
<comment type="function">
    <text evidence="1">The RecF protein is involved in DNA metabolism; it is required for DNA replication and normal SOS inducibility. RecF binds preferentially to single-stranded, linear DNA. It also seems to bind ATP.</text>
</comment>
<comment type="subcellular location">
    <subcellularLocation>
        <location evidence="1">Cytoplasm</location>
    </subcellularLocation>
</comment>
<comment type="similarity">
    <text evidence="1">Belongs to the RecF family.</text>
</comment>
<reference key="1">
    <citation type="journal article" date="2005" name="J. Bacteriol.">
        <title>Insights on evolution of virulence and resistance from the complete genome analysis of an early methicillin-resistant Staphylococcus aureus strain and a biofilm-producing methicillin-resistant Staphylococcus epidermidis strain.</title>
        <authorList>
            <person name="Gill S.R."/>
            <person name="Fouts D.E."/>
            <person name="Archer G.L."/>
            <person name="Mongodin E.F."/>
            <person name="DeBoy R.T."/>
            <person name="Ravel J."/>
            <person name="Paulsen I.T."/>
            <person name="Kolonay J.F."/>
            <person name="Brinkac L.M."/>
            <person name="Beanan M.J."/>
            <person name="Dodson R.J."/>
            <person name="Daugherty S.C."/>
            <person name="Madupu R."/>
            <person name="Angiuoli S.V."/>
            <person name="Durkin A.S."/>
            <person name="Haft D.H."/>
            <person name="Vamathevan J.J."/>
            <person name="Khouri H."/>
            <person name="Utterback T.R."/>
            <person name="Lee C."/>
            <person name="Dimitrov G."/>
            <person name="Jiang L."/>
            <person name="Qin H."/>
            <person name="Weidman J."/>
            <person name="Tran K."/>
            <person name="Kang K.H."/>
            <person name="Hance I.R."/>
            <person name="Nelson K.E."/>
            <person name="Fraser C.M."/>
        </authorList>
    </citation>
    <scope>NUCLEOTIDE SEQUENCE [LARGE SCALE GENOMIC DNA]</scope>
    <source>
        <strain>COL</strain>
    </source>
</reference>
<feature type="chain" id="PRO_0000196456" description="DNA replication and repair protein RecF">
    <location>
        <begin position="1"/>
        <end position="370"/>
    </location>
</feature>
<feature type="binding site" evidence="1">
    <location>
        <begin position="30"/>
        <end position="37"/>
    </location>
    <ligand>
        <name>ATP</name>
        <dbReference type="ChEBI" id="CHEBI:30616"/>
    </ligand>
</feature>
<evidence type="ECO:0000255" key="1">
    <source>
        <dbReference type="HAMAP-Rule" id="MF_00365"/>
    </source>
</evidence>
<protein>
    <recommendedName>
        <fullName evidence="1">DNA replication and repair protein RecF</fullName>
    </recommendedName>
</protein>
<proteinExistence type="inferred from homology"/>
<sequence length="370" mass="42415">MKLNTLQLENYRNYDEVTLKCHPDVNILIGENAQGKTNLLESIYTLALAKSHRTSNDKELIRFNADYAKIEGELSYRHGTMPLTMFITKKGKQVKVNHLEQSRLTQYIGHLNVVLFAPEDLNIVKGSPQIRRRFIDMELGQISAVYLNDLAQYQRILKQKNNYLKQLQLGQKKDLTMLEVLNQQFAEYAMKVTDKRAHFIQELESLAKPIHAGITNDKEALSLNYLPSLKFDYAQNEAARLEEIMSILSDNMQREKERGISLFGPHRDDISFDVNGMDAQTYGSQGQQRTTALSIKLAEIELMNIEVGEYPILLLDDVLSELDDSRQTHLLSTIQHKVQTFVTTTSVDGIDHEIMNNAKLYRINQGEIIK</sequence>
<dbReference type="EMBL" id="CP000046">
    <property type="protein sequence ID" value="AAW37392.1"/>
    <property type="molecule type" value="Genomic_DNA"/>
</dbReference>
<dbReference type="RefSeq" id="WP_000775113.1">
    <property type="nucleotide sequence ID" value="NZ_JBGOFO010000001.1"/>
</dbReference>
<dbReference type="SMR" id="Q5HJZ2"/>
<dbReference type="KEGG" id="sac:SACOL0004"/>
<dbReference type="HOGENOM" id="CLU_040267_0_1_9"/>
<dbReference type="Proteomes" id="UP000000530">
    <property type="component" value="Chromosome"/>
</dbReference>
<dbReference type="GO" id="GO:0005737">
    <property type="term" value="C:cytoplasm"/>
    <property type="evidence" value="ECO:0007669"/>
    <property type="project" value="UniProtKB-SubCell"/>
</dbReference>
<dbReference type="GO" id="GO:0005524">
    <property type="term" value="F:ATP binding"/>
    <property type="evidence" value="ECO:0007669"/>
    <property type="project" value="UniProtKB-UniRule"/>
</dbReference>
<dbReference type="GO" id="GO:0003697">
    <property type="term" value="F:single-stranded DNA binding"/>
    <property type="evidence" value="ECO:0007669"/>
    <property type="project" value="UniProtKB-UniRule"/>
</dbReference>
<dbReference type="GO" id="GO:0006260">
    <property type="term" value="P:DNA replication"/>
    <property type="evidence" value="ECO:0007669"/>
    <property type="project" value="UniProtKB-UniRule"/>
</dbReference>
<dbReference type="GO" id="GO:0000731">
    <property type="term" value="P:DNA synthesis involved in DNA repair"/>
    <property type="evidence" value="ECO:0007669"/>
    <property type="project" value="TreeGrafter"/>
</dbReference>
<dbReference type="GO" id="GO:0006302">
    <property type="term" value="P:double-strand break repair"/>
    <property type="evidence" value="ECO:0007669"/>
    <property type="project" value="TreeGrafter"/>
</dbReference>
<dbReference type="GO" id="GO:0009432">
    <property type="term" value="P:SOS response"/>
    <property type="evidence" value="ECO:0007669"/>
    <property type="project" value="UniProtKB-UniRule"/>
</dbReference>
<dbReference type="CDD" id="cd03242">
    <property type="entry name" value="ABC_RecF"/>
    <property type="match status" value="1"/>
</dbReference>
<dbReference type="FunFam" id="1.20.1050.90:FF:000002">
    <property type="entry name" value="DNA replication and repair protein RecF"/>
    <property type="match status" value="1"/>
</dbReference>
<dbReference type="Gene3D" id="3.40.50.300">
    <property type="entry name" value="P-loop containing nucleotide triphosphate hydrolases"/>
    <property type="match status" value="1"/>
</dbReference>
<dbReference type="Gene3D" id="1.20.1050.90">
    <property type="entry name" value="RecF/RecN/SMC, N-terminal domain"/>
    <property type="match status" value="1"/>
</dbReference>
<dbReference type="HAMAP" id="MF_00365">
    <property type="entry name" value="RecF"/>
    <property type="match status" value="1"/>
</dbReference>
<dbReference type="InterPro" id="IPR001238">
    <property type="entry name" value="DNA-binding_RecF"/>
</dbReference>
<dbReference type="InterPro" id="IPR018078">
    <property type="entry name" value="DNA-binding_RecF_CS"/>
</dbReference>
<dbReference type="InterPro" id="IPR027417">
    <property type="entry name" value="P-loop_NTPase"/>
</dbReference>
<dbReference type="InterPro" id="IPR003395">
    <property type="entry name" value="RecF/RecN/SMC_N"/>
</dbReference>
<dbReference type="InterPro" id="IPR042174">
    <property type="entry name" value="RecF_2"/>
</dbReference>
<dbReference type="NCBIfam" id="TIGR00611">
    <property type="entry name" value="recf"/>
    <property type="match status" value="1"/>
</dbReference>
<dbReference type="PANTHER" id="PTHR32182">
    <property type="entry name" value="DNA REPLICATION AND REPAIR PROTEIN RECF"/>
    <property type="match status" value="1"/>
</dbReference>
<dbReference type="PANTHER" id="PTHR32182:SF0">
    <property type="entry name" value="DNA REPLICATION AND REPAIR PROTEIN RECF"/>
    <property type="match status" value="1"/>
</dbReference>
<dbReference type="Pfam" id="PF02463">
    <property type="entry name" value="SMC_N"/>
    <property type="match status" value="1"/>
</dbReference>
<dbReference type="SUPFAM" id="SSF52540">
    <property type="entry name" value="P-loop containing nucleoside triphosphate hydrolases"/>
    <property type="match status" value="1"/>
</dbReference>
<dbReference type="PROSITE" id="PS00617">
    <property type="entry name" value="RECF_1"/>
    <property type="match status" value="1"/>
</dbReference>
<dbReference type="PROSITE" id="PS00618">
    <property type="entry name" value="RECF_2"/>
    <property type="match status" value="1"/>
</dbReference>
<gene>
    <name evidence="1" type="primary">recF</name>
    <name type="ordered locus">SACOL0004</name>
</gene>
<keyword id="KW-0067">ATP-binding</keyword>
<keyword id="KW-0963">Cytoplasm</keyword>
<keyword id="KW-0227">DNA damage</keyword>
<keyword id="KW-0234">DNA repair</keyword>
<keyword id="KW-0235">DNA replication</keyword>
<keyword id="KW-0238">DNA-binding</keyword>
<keyword id="KW-0547">Nucleotide-binding</keyword>
<keyword id="KW-0742">SOS response</keyword>